<gene>
    <name evidence="2" type="primary">HIS6</name>
    <name type="ordered locus">YIL020C</name>
</gene>
<accession>P40545</accession>
<accession>D6VVQ9</accession>
<accession>Q6Q5P5</accession>
<reference key="1">
    <citation type="journal article" date="1997" name="Gene">
        <title>Paralogous histidine biosynthetic genes: evolutionary analysis of the Saccharomyces cerevisiae HIS6 and HIS7 genes.</title>
        <authorList>
            <person name="Fani R."/>
            <person name="Tamburini E."/>
            <person name="Mori E."/>
            <person name="Lazcano A."/>
            <person name="Lio P."/>
            <person name="Barberio C."/>
            <person name="Casalone E."/>
            <person name="Cavalieri D."/>
            <person name="Perito B."/>
            <person name="Polsinelli M."/>
        </authorList>
    </citation>
    <scope>NUCLEOTIDE SEQUENCE [GENOMIC DNA]</scope>
    <scope>FUNCTION</scope>
    <scope>CATALYTIC ACTIVITY</scope>
    <source>
        <strain>YNN 282</strain>
    </source>
</reference>
<reference key="2">
    <citation type="journal article" date="1997" name="Nature">
        <title>The nucleotide sequence of Saccharomyces cerevisiae chromosome IX.</title>
        <authorList>
            <person name="Churcher C.M."/>
            <person name="Bowman S."/>
            <person name="Badcock K."/>
            <person name="Bankier A.T."/>
            <person name="Brown D."/>
            <person name="Chillingworth T."/>
            <person name="Connor R."/>
            <person name="Devlin K."/>
            <person name="Gentles S."/>
            <person name="Hamlin N."/>
            <person name="Harris D.E."/>
            <person name="Horsnell T."/>
            <person name="Hunt S."/>
            <person name="Jagels K."/>
            <person name="Jones M."/>
            <person name="Lye G."/>
            <person name="Moule S."/>
            <person name="Odell C."/>
            <person name="Pearson D."/>
            <person name="Rajandream M.A."/>
            <person name="Rice P."/>
            <person name="Rowley N."/>
            <person name="Skelton J."/>
            <person name="Smith V."/>
            <person name="Walsh S.V."/>
            <person name="Whitehead S."/>
            <person name="Barrell B.G."/>
        </authorList>
    </citation>
    <scope>NUCLEOTIDE SEQUENCE [LARGE SCALE GENOMIC DNA]</scope>
    <source>
        <strain>ATCC 204508 / S288c</strain>
    </source>
</reference>
<reference key="3">
    <citation type="journal article" date="2014" name="G3 (Bethesda)">
        <title>The reference genome sequence of Saccharomyces cerevisiae: Then and now.</title>
        <authorList>
            <person name="Engel S.R."/>
            <person name="Dietrich F.S."/>
            <person name="Fisk D.G."/>
            <person name="Binkley G."/>
            <person name="Balakrishnan R."/>
            <person name="Costanzo M.C."/>
            <person name="Dwight S.S."/>
            <person name="Hitz B.C."/>
            <person name="Karra K."/>
            <person name="Nash R.S."/>
            <person name="Weng S."/>
            <person name="Wong E.D."/>
            <person name="Lloyd P."/>
            <person name="Skrzypek M.S."/>
            <person name="Miyasato S.R."/>
            <person name="Simison M."/>
            <person name="Cherry J.M."/>
        </authorList>
    </citation>
    <scope>GENOME REANNOTATION</scope>
    <source>
        <strain>ATCC 204508 / S288c</strain>
    </source>
</reference>
<reference key="4">
    <citation type="journal article" date="2007" name="Genome Res.">
        <title>Approaching a complete repository of sequence-verified protein-encoding clones for Saccharomyces cerevisiae.</title>
        <authorList>
            <person name="Hu Y."/>
            <person name="Rolfs A."/>
            <person name="Bhullar B."/>
            <person name="Murthy T.V.S."/>
            <person name="Zhu C."/>
            <person name="Berger M.F."/>
            <person name="Camargo A.A."/>
            <person name="Kelley F."/>
            <person name="McCarron S."/>
            <person name="Jepson D."/>
            <person name="Richardson A."/>
            <person name="Raphael J."/>
            <person name="Moreira D."/>
            <person name="Taycher E."/>
            <person name="Zuo D."/>
            <person name="Mohr S."/>
            <person name="Kane M.F."/>
            <person name="Williamson J."/>
            <person name="Simpson A.J.G."/>
            <person name="Bulyk M.L."/>
            <person name="Harlow E."/>
            <person name="Marsischky G."/>
            <person name="Kolodner R.D."/>
            <person name="LaBaer J."/>
        </authorList>
    </citation>
    <scope>NUCLEOTIDE SEQUENCE [GENOMIC DNA]</scope>
    <source>
        <strain>ATCC 204508 / S288c</strain>
    </source>
</reference>
<reference key="5">
    <citation type="journal article" date="2003" name="Nature">
        <title>Global analysis of protein expression in yeast.</title>
        <authorList>
            <person name="Ghaemmaghami S."/>
            <person name="Huh W.-K."/>
            <person name="Bower K."/>
            <person name="Howson R.W."/>
            <person name="Belle A."/>
            <person name="Dephoure N."/>
            <person name="O'Shea E.K."/>
            <person name="Weissman J.S."/>
        </authorList>
    </citation>
    <scope>LEVEL OF PROTEIN EXPRESSION [LARGE SCALE ANALYSIS]</scope>
</reference>
<reference key="6">
    <citation type="journal article" date="2006" name="Protein Sci.">
        <title>Crystal structure of the yeast His6 enzyme suggests a reaction mechanism.</title>
        <authorList>
            <person name="Quevillon-Cheruel S."/>
            <person name="Leulliot N."/>
            <person name="Graille M."/>
            <person name="Blondeau K."/>
            <person name="Janin J."/>
            <person name="van Tilbeurgh H."/>
        </authorList>
    </citation>
    <scope>X-RAY CRYSTALLOGRAPHY (1.3 ANGSTROMS) OF 2-261</scope>
</reference>
<organism>
    <name type="scientific">Saccharomyces cerevisiae (strain ATCC 204508 / S288c)</name>
    <name type="common">Baker's yeast</name>
    <dbReference type="NCBI Taxonomy" id="559292"/>
    <lineage>
        <taxon>Eukaryota</taxon>
        <taxon>Fungi</taxon>
        <taxon>Dikarya</taxon>
        <taxon>Ascomycota</taxon>
        <taxon>Saccharomycotina</taxon>
        <taxon>Saccharomycetes</taxon>
        <taxon>Saccharomycetales</taxon>
        <taxon>Saccharomycetaceae</taxon>
        <taxon>Saccharomyces</taxon>
    </lineage>
</organism>
<feature type="chain" id="PRO_0000141963" description="1-(5-phosphoribosyl)-5-[(5-phosphoribosylamino)methylideneamino] imidazole-4-carboxamide isomerase">
    <location>
        <begin position="1"/>
        <end position="261"/>
    </location>
</feature>
<feature type="sequence conflict" description="In Ref. 4; AAS56185." evidence="3" ref="4">
    <original>F</original>
    <variation>S</variation>
    <location>
        <position position="243"/>
    </location>
</feature>
<feature type="strand" evidence="5">
    <location>
        <begin position="7"/>
        <end position="11"/>
    </location>
</feature>
<feature type="helix" evidence="5">
    <location>
        <begin position="41"/>
        <end position="50"/>
    </location>
</feature>
<feature type="strand" evidence="5">
    <location>
        <begin position="57"/>
        <end position="64"/>
    </location>
</feature>
<feature type="helix" evidence="5">
    <location>
        <begin position="66"/>
        <end position="75"/>
    </location>
</feature>
<feature type="turn" evidence="5">
    <location>
        <begin position="77"/>
        <end position="79"/>
    </location>
</feature>
<feature type="strand" evidence="5">
    <location>
        <begin position="80"/>
        <end position="85"/>
    </location>
</feature>
<feature type="turn" evidence="5">
    <location>
        <begin position="88"/>
        <end position="90"/>
    </location>
</feature>
<feature type="helix" evidence="5">
    <location>
        <begin position="91"/>
        <end position="94"/>
    </location>
</feature>
<feature type="turn" evidence="5">
    <location>
        <begin position="95"/>
        <end position="97"/>
    </location>
</feature>
<feature type="strand" evidence="5">
    <location>
        <begin position="101"/>
        <end position="103"/>
    </location>
</feature>
<feature type="helix" evidence="5">
    <location>
        <begin position="105"/>
        <end position="107"/>
    </location>
</feature>
<feature type="helix" evidence="5">
    <location>
        <begin position="116"/>
        <end position="126"/>
    </location>
</feature>
<feature type="helix" evidence="5">
    <location>
        <begin position="128"/>
        <end position="130"/>
    </location>
</feature>
<feature type="strand" evidence="5">
    <location>
        <begin position="131"/>
        <end position="141"/>
    </location>
</feature>
<feature type="strand" evidence="5">
    <location>
        <begin position="144"/>
        <end position="149"/>
    </location>
</feature>
<feature type="turn" evidence="5">
    <location>
        <begin position="150"/>
        <end position="153"/>
    </location>
</feature>
<feature type="strand" evidence="5">
    <location>
        <begin position="154"/>
        <end position="161"/>
    </location>
</feature>
<feature type="helix" evidence="5">
    <location>
        <begin position="162"/>
        <end position="168"/>
    </location>
</feature>
<feature type="turn" evidence="5">
    <location>
        <begin position="169"/>
        <end position="171"/>
    </location>
</feature>
<feature type="strand" evidence="5">
    <location>
        <begin position="173"/>
        <end position="178"/>
    </location>
</feature>
<feature type="helix" evidence="5">
    <location>
        <begin position="191"/>
        <end position="201"/>
    </location>
</feature>
<feature type="strand" evidence="5">
    <location>
        <begin position="208"/>
        <end position="213"/>
    </location>
</feature>
<feature type="helix" evidence="5">
    <location>
        <begin position="220"/>
        <end position="228"/>
    </location>
</feature>
<feature type="strand" evidence="5">
    <location>
        <begin position="232"/>
        <end position="235"/>
    </location>
</feature>
<feature type="helix" evidence="5">
    <location>
        <begin position="241"/>
        <end position="243"/>
    </location>
</feature>
<feature type="strand" evidence="5">
    <location>
        <begin position="246"/>
        <end position="248"/>
    </location>
</feature>
<feature type="helix" evidence="5">
    <location>
        <begin position="250"/>
        <end position="260"/>
    </location>
</feature>
<dbReference type="EC" id="5.3.1.16" evidence="4"/>
<dbReference type="EMBL" id="X87341">
    <property type="protein sequence ID" value="CAA60779.1"/>
    <property type="molecule type" value="Genomic_DNA"/>
</dbReference>
<dbReference type="EMBL" id="Z46881">
    <property type="protein sequence ID" value="CAA86972.1"/>
    <property type="molecule type" value="Genomic_DNA"/>
</dbReference>
<dbReference type="EMBL" id="AY557859">
    <property type="protein sequence ID" value="AAS56185.1"/>
    <property type="molecule type" value="Genomic_DNA"/>
</dbReference>
<dbReference type="EMBL" id="BK006942">
    <property type="protein sequence ID" value="DAA08525.1"/>
    <property type="molecule type" value="Genomic_DNA"/>
</dbReference>
<dbReference type="PIR" id="S49962">
    <property type="entry name" value="S49962"/>
</dbReference>
<dbReference type="RefSeq" id="NP_012244.3">
    <property type="nucleotide sequence ID" value="NM_001179370.3"/>
</dbReference>
<dbReference type="PDB" id="2AGK">
    <property type="method" value="X-ray"/>
    <property type="resolution" value="1.30 A"/>
    <property type="chains" value="A=2-261"/>
</dbReference>
<dbReference type="PDBsum" id="2AGK"/>
<dbReference type="SMR" id="P40545"/>
<dbReference type="BioGRID" id="34968">
    <property type="interactions" value="25"/>
</dbReference>
<dbReference type="DIP" id="DIP-4716N"/>
<dbReference type="FunCoup" id="P40545">
    <property type="interactions" value="309"/>
</dbReference>
<dbReference type="IntAct" id="P40545">
    <property type="interactions" value="2"/>
</dbReference>
<dbReference type="MINT" id="P40545"/>
<dbReference type="STRING" id="4932.YIL020C"/>
<dbReference type="iPTMnet" id="P40545"/>
<dbReference type="PaxDb" id="4932-YIL020C"/>
<dbReference type="PeptideAtlas" id="P40545"/>
<dbReference type="EnsemblFungi" id="YIL020C_mRNA">
    <property type="protein sequence ID" value="YIL020C"/>
    <property type="gene ID" value="YIL020C"/>
</dbReference>
<dbReference type="GeneID" id="854792"/>
<dbReference type="KEGG" id="sce:YIL020C"/>
<dbReference type="AGR" id="SGD:S000001282"/>
<dbReference type="SGD" id="S000001282">
    <property type="gene designation" value="HIS6"/>
</dbReference>
<dbReference type="VEuPathDB" id="FungiDB:YIL020C"/>
<dbReference type="eggNOG" id="KOG3055">
    <property type="taxonomic scope" value="Eukaryota"/>
</dbReference>
<dbReference type="HOGENOM" id="CLU_065050_0_0_1"/>
<dbReference type="InParanoid" id="P40545"/>
<dbReference type="OMA" id="IEWNKTH"/>
<dbReference type="OrthoDB" id="446074at2759"/>
<dbReference type="BioCyc" id="YEAST:YIL020C-MONOMER"/>
<dbReference type="BRENDA" id="5.3.1.16">
    <property type="organism ID" value="984"/>
</dbReference>
<dbReference type="UniPathway" id="UPA00031">
    <property type="reaction ID" value="UER00009"/>
</dbReference>
<dbReference type="BioGRID-ORCS" id="854792">
    <property type="hits" value="1 hit in 10 CRISPR screens"/>
</dbReference>
<dbReference type="CD-CODE" id="E03F929F">
    <property type="entry name" value="Stress granule"/>
</dbReference>
<dbReference type="EvolutionaryTrace" id="P40545"/>
<dbReference type="PRO" id="PR:P40545"/>
<dbReference type="Proteomes" id="UP000002311">
    <property type="component" value="Chromosome IX"/>
</dbReference>
<dbReference type="RNAct" id="P40545">
    <property type="molecule type" value="protein"/>
</dbReference>
<dbReference type="GO" id="GO:0005737">
    <property type="term" value="C:cytoplasm"/>
    <property type="evidence" value="ECO:0007005"/>
    <property type="project" value="SGD"/>
</dbReference>
<dbReference type="GO" id="GO:0005634">
    <property type="term" value="C:nucleus"/>
    <property type="evidence" value="ECO:0007005"/>
    <property type="project" value="SGD"/>
</dbReference>
<dbReference type="GO" id="GO:0003949">
    <property type="term" value="F:1-(5-phosphoribosyl)-5-[(5-phosphoribosylamino)methylideneamino]imidazole-4-carboxamide isomerase activity"/>
    <property type="evidence" value="ECO:0000316"/>
    <property type="project" value="SGD"/>
</dbReference>
<dbReference type="GO" id="GO:0000105">
    <property type="term" value="P:L-histidine biosynthetic process"/>
    <property type="evidence" value="ECO:0000315"/>
    <property type="project" value="SGD"/>
</dbReference>
<dbReference type="CDD" id="cd04723">
    <property type="entry name" value="HisA_HisF"/>
    <property type="match status" value="1"/>
</dbReference>
<dbReference type="FunFam" id="3.20.20.70:FF:000110">
    <property type="entry name" value="1-(5-phosphoribosyl)-5-[(5-phosphoribosylamino)methylideneamino] imidazole-4-carboxamide isomerase, chloroplastic"/>
    <property type="match status" value="1"/>
</dbReference>
<dbReference type="Gene3D" id="3.20.20.70">
    <property type="entry name" value="Aldolase class I"/>
    <property type="match status" value="1"/>
</dbReference>
<dbReference type="InterPro" id="IPR013785">
    <property type="entry name" value="Aldolase_TIM"/>
</dbReference>
<dbReference type="InterPro" id="IPR011858">
    <property type="entry name" value="His6-like_euk"/>
</dbReference>
<dbReference type="InterPro" id="IPR006062">
    <property type="entry name" value="His_biosynth"/>
</dbReference>
<dbReference type="InterPro" id="IPR044524">
    <property type="entry name" value="Isoase_HisA-like"/>
</dbReference>
<dbReference type="InterPro" id="IPR011060">
    <property type="entry name" value="RibuloseP-bd_barrel"/>
</dbReference>
<dbReference type="NCBIfam" id="TIGR02129">
    <property type="entry name" value="hisA_euk"/>
    <property type="match status" value="1"/>
</dbReference>
<dbReference type="PANTHER" id="PTHR43090">
    <property type="entry name" value="1-(5-PHOSPHORIBOSYL)-5-[(5-PHOSPHORIBOSYLAMINO)METHYLIDENEAMINO] IMIDAZOLE-4-CARBOXAMIDE ISOMERASE"/>
    <property type="match status" value="1"/>
</dbReference>
<dbReference type="PANTHER" id="PTHR43090:SF2">
    <property type="entry name" value="1-(5-PHOSPHORIBOSYL)-5-[(5-PHOSPHORIBOSYLAMINO)METHYLIDENEAMINO] IMIDAZOLE-4-CARBOXAMIDE ISOMERASE"/>
    <property type="match status" value="1"/>
</dbReference>
<dbReference type="Pfam" id="PF00977">
    <property type="entry name" value="His_biosynth"/>
    <property type="match status" value="1"/>
</dbReference>
<dbReference type="SUPFAM" id="SSF51366">
    <property type="entry name" value="Ribulose-phoshate binding barrel"/>
    <property type="match status" value="1"/>
</dbReference>
<name>HIS4_YEAST</name>
<comment type="function">
    <text evidence="4">Catalyzes the isomerization of the aminoaldose moiety of ProFAR to the aminoketose of PRFAR.</text>
</comment>
<comment type="catalytic activity">
    <reaction evidence="4">
        <text>1-(5-phospho-beta-D-ribosyl)-5-[(5-phospho-beta-D-ribosylamino)methylideneamino]imidazole-4-carboxamide = 5-[(5-phospho-1-deoxy-D-ribulos-1-ylimino)methylamino]-1-(5-phospho-beta-D-ribosyl)imidazole-4-carboxamide</text>
        <dbReference type="Rhea" id="RHEA:15469"/>
        <dbReference type="ChEBI" id="CHEBI:58435"/>
        <dbReference type="ChEBI" id="CHEBI:58525"/>
        <dbReference type="EC" id="5.3.1.16"/>
    </reaction>
</comment>
<comment type="pathway">
    <text>Amino-acid biosynthesis; L-histidine biosynthesis; L-histidine from 5-phospho-alpha-D-ribose 1-diphosphate: step 4/9.</text>
</comment>
<comment type="subcellular location">
    <subcellularLocation>
        <location evidence="3">Cytoplasm</location>
    </subcellularLocation>
</comment>
<comment type="miscellaneous">
    <text evidence="1">Present with 6490 molecules/cell in log phase SD medium.</text>
</comment>
<comment type="similarity">
    <text evidence="3">Belongs to the HisA/HisF family.</text>
</comment>
<evidence type="ECO:0000269" key="1">
    <source>
    </source>
</evidence>
<evidence type="ECO:0000303" key="2">
    <source>
    </source>
</evidence>
<evidence type="ECO:0000305" key="3"/>
<evidence type="ECO:0000305" key="4">
    <source>
    </source>
</evidence>
<evidence type="ECO:0007829" key="5">
    <source>
        <dbReference type="PDB" id="2AGK"/>
    </source>
</evidence>
<keyword id="KW-0002">3D-structure</keyword>
<keyword id="KW-0028">Amino-acid biosynthesis</keyword>
<keyword id="KW-0963">Cytoplasm</keyword>
<keyword id="KW-0368">Histidine biosynthesis</keyword>
<keyword id="KW-0413">Isomerase</keyword>
<keyword id="KW-1185">Reference proteome</keyword>
<proteinExistence type="evidence at protein level"/>
<sequence>MTKFIGCIDLHNGEVKQIVGGTLTSKKEDVPKTNFVSQHPSSYYAKLYKDRDVQGCHVIKLGPNNDDAAREALQESPQFLQVGGGINDTNCLEWLKWASKVIVTSWLFTKEGHFQLKRLERLTELCGKDRIVVDLSCRKTQDGRWIVAMNKWQTLTDLELNADTFRELRKYTNEFLIHAADVEGLCGGIDELLVSKLFEWTKDYDDLKIVYAGGAKSVDDLKLVDELSHGKVDLTFGSSLDIFGGNLVKFEDCCRWNEKQG</sequence>
<protein>
    <recommendedName>
        <fullName evidence="2">1-(5-phosphoribosyl)-5-[(5-phosphoribosylamino)methylideneamino] imidazole-4-carboxamide isomerase</fullName>
        <ecNumber evidence="4">5.3.1.16</ecNumber>
    </recommendedName>
    <alternativeName>
        <fullName evidence="2">5-proFAR isomerase</fullName>
    </alternativeName>
    <alternativeName>
        <fullName evidence="2">Phosphoribosylformimino-5-aminoimidazole carboxamide ribotide isomerase</fullName>
    </alternativeName>
</protein>